<keyword id="KW-0143">Chaperone</keyword>
<keyword id="KW-0963">Cytoplasm</keyword>
<keyword id="KW-1185">Reference proteome</keyword>
<evidence type="ECO:0000255" key="1">
    <source>
        <dbReference type="HAMAP-Rule" id="MF_00580"/>
    </source>
</evidence>
<proteinExistence type="inferred from homology"/>
<comment type="function">
    <text evidence="1">Together with the chaperonin GroEL, plays an essential role in assisting protein folding. The GroEL-GroES system forms a nano-cage that allows encapsulation of the non-native substrate proteins and provides a physical environment optimized to promote and accelerate protein folding. GroES binds to the apical surface of the GroEL ring, thereby capping the opening of the GroEL channel.</text>
</comment>
<comment type="subunit">
    <text evidence="1">Heptamer of 7 subunits arranged in a ring. Interacts with the chaperonin GroEL.</text>
</comment>
<comment type="subcellular location">
    <subcellularLocation>
        <location evidence="1">Cytoplasm</location>
    </subcellularLocation>
</comment>
<comment type="similarity">
    <text evidence="1">Belongs to the GroES chaperonin family.</text>
</comment>
<dbReference type="EMBL" id="AE010299">
    <property type="protein sequence ID" value="AAM04073.1"/>
    <property type="molecule type" value="Genomic_DNA"/>
</dbReference>
<dbReference type="SMR" id="Q8TGX8"/>
<dbReference type="STRING" id="188937.MA_0630"/>
<dbReference type="EnsemblBacteria" id="AAM04073">
    <property type="protein sequence ID" value="AAM04073"/>
    <property type="gene ID" value="MA_0630"/>
</dbReference>
<dbReference type="KEGG" id="mac:MA_0630"/>
<dbReference type="HOGENOM" id="CLU_132825_1_0_2"/>
<dbReference type="InParanoid" id="Q8TGX8"/>
<dbReference type="PhylomeDB" id="Q8TGX8"/>
<dbReference type="Proteomes" id="UP000002487">
    <property type="component" value="Chromosome"/>
</dbReference>
<dbReference type="GO" id="GO:0005737">
    <property type="term" value="C:cytoplasm"/>
    <property type="evidence" value="ECO:0007669"/>
    <property type="project" value="UniProtKB-SubCell"/>
</dbReference>
<dbReference type="GO" id="GO:0005524">
    <property type="term" value="F:ATP binding"/>
    <property type="evidence" value="ECO:0007669"/>
    <property type="project" value="InterPro"/>
</dbReference>
<dbReference type="GO" id="GO:0046872">
    <property type="term" value="F:metal ion binding"/>
    <property type="evidence" value="ECO:0000318"/>
    <property type="project" value="GO_Central"/>
</dbReference>
<dbReference type="GO" id="GO:0044183">
    <property type="term" value="F:protein folding chaperone"/>
    <property type="evidence" value="ECO:0007669"/>
    <property type="project" value="InterPro"/>
</dbReference>
<dbReference type="GO" id="GO:0051087">
    <property type="term" value="F:protein-folding chaperone binding"/>
    <property type="evidence" value="ECO:0000318"/>
    <property type="project" value="GO_Central"/>
</dbReference>
<dbReference type="GO" id="GO:0051082">
    <property type="term" value="F:unfolded protein binding"/>
    <property type="evidence" value="ECO:0000318"/>
    <property type="project" value="GO_Central"/>
</dbReference>
<dbReference type="GO" id="GO:0051085">
    <property type="term" value="P:chaperone cofactor-dependent protein refolding"/>
    <property type="evidence" value="ECO:0000318"/>
    <property type="project" value="GO_Central"/>
</dbReference>
<dbReference type="CDD" id="cd00320">
    <property type="entry name" value="cpn10"/>
    <property type="match status" value="1"/>
</dbReference>
<dbReference type="FunFam" id="2.30.33.40:FF:000001">
    <property type="entry name" value="10 kDa chaperonin"/>
    <property type="match status" value="1"/>
</dbReference>
<dbReference type="Gene3D" id="2.30.33.40">
    <property type="entry name" value="GroES chaperonin"/>
    <property type="match status" value="1"/>
</dbReference>
<dbReference type="HAMAP" id="MF_00580">
    <property type="entry name" value="CH10"/>
    <property type="match status" value="1"/>
</dbReference>
<dbReference type="InterPro" id="IPR020818">
    <property type="entry name" value="Chaperonin_GroES"/>
</dbReference>
<dbReference type="InterPro" id="IPR037124">
    <property type="entry name" value="Chaperonin_GroES_sf"/>
</dbReference>
<dbReference type="InterPro" id="IPR018369">
    <property type="entry name" value="Chaprnonin_Cpn10_CS"/>
</dbReference>
<dbReference type="InterPro" id="IPR011032">
    <property type="entry name" value="GroES-like_sf"/>
</dbReference>
<dbReference type="NCBIfam" id="NF001539">
    <property type="entry name" value="PRK00364.3-5"/>
    <property type="match status" value="1"/>
</dbReference>
<dbReference type="PANTHER" id="PTHR10772">
    <property type="entry name" value="10 KDA HEAT SHOCK PROTEIN"/>
    <property type="match status" value="1"/>
</dbReference>
<dbReference type="PANTHER" id="PTHR10772:SF63">
    <property type="entry name" value="20 KDA CHAPERONIN, CHLOROPLASTIC"/>
    <property type="match status" value="1"/>
</dbReference>
<dbReference type="Pfam" id="PF00166">
    <property type="entry name" value="Cpn10"/>
    <property type="match status" value="1"/>
</dbReference>
<dbReference type="PRINTS" id="PR00297">
    <property type="entry name" value="CHAPERONIN10"/>
</dbReference>
<dbReference type="SMART" id="SM00883">
    <property type="entry name" value="Cpn10"/>
    <property type="match status" value="1"/>
</dbReference>
<dbReference type="SUPFAM" id="SSF50129">
    <property type="entry name" value="GroES-like"/>
    <property type="match status" value="1"/>
</dbReference>
<dbReference type="PROSITE" id="PS00681">
    <property type="entry name" value="CHAPERONINS_CPN10"/>
    <property type="match status" value="1"/>
</dbReference>
<reference key="1">
    <citation type="journal article" date="2002" name="Genome Res.">
        <title>The genome of Methanosarcina acetivorans reveals extensive metabolic and physiological diversity.</title>
        <authorList>
            <person name="Galagan J.E."/>
            <person name="Nusbaum C."/>
            <person name="Roy A."/>
            <person name="Endrizzi M.G."/>
            <person name="Macdonald P."/>
            <person name="FitzHugh W."/>
            <person name="Calvo S."/>
            <person name="Engels R."/>
            <person name="Smirnov S."/>
            <person name="Atnoor D."/>
            <person name="Brown A."/>
            <person name="Allen N."/>
            <person name="Naylor J."/>
            <person name="Stange-Thomann N."/>
            <person name="DeArellano K."/>
            <person name="Johnson R."/>
            <person name="Linton L."/>
            <person name="McEwan P."/>
            <person name="McKernan K."/>
            <person name="Talamas J."/>
            <person name="Tirrell A."/>
            <person name="Ye W."/>
            <person name="Zimmer A."/>
            <person name="Barber R.D."/>
            <person name="Cann I."/>
            <person name="Graham D.E."/>
            <person name="Grahame D.A."/>
            <person name="Guss A.M."/>
            <person name="Hedderich R."/>
            <person name="Ingram-Smith C."/>
            <person name="Kuettner H.C."/>
            <person name="Krzycki J.A."/>
            <person name="Leigh J.A."/>
            <person name="Li W."/>
            <person name="Liu J."/>
            <person name="Mukhopadhyay B."/>
            <person name="Reeve J.N."/>
            <person name="Smith K."/>
            <person name="Springer T.A."/>
            <person name="Umayam L.A."/>
            <person name="White O."/>
            <person name="White R.H."/>
            <person name="de Macario E.C."/>
            <person name="Ferry J.G."/>
            <person name="Jarrell K.F."/>
            <person name="Jing H."/>
            <person name="Macario A.J.L."/>
            <person name="Paulsen I.T."/>
            <person name="Pritchett M."/>
            <person name="Sowers K.R."/>
            <person name="Swanson R.V."/>
            <person name="Zinder S.H."/>
            <person name="Lander E."/>
            <person name="Metcalf W.W."/>
            <person name="Birren B."/>
        </authorList>
    </citation>
    <scope>NUCLEOTIDE SEQUENCE [LARGE SCALE GENOMIC DNA]</scope>
    <source>
        <strain>ATCC 35395 / DSM 2834 / JCM 12185 / C2A</strain>
    </source>
</reference>
<name>CH10_METAC</name>
<accession>Q8TGX8</accession>
<feature type="chain" id="PRO_0000174913" description="Co-chaperonin GroES">
    <location>
        <begin position="1"/>
        <end position="109"/>
    </location>
</feature>
<protein>
    <recommendedName>
        <fullName evidence="1">Co-chaperonin GroES</fullName>
    </recommendedName>
    <alternativeName>
        <fullName evidence="1">10 kDa chaperonin</fullName>
    </alternativeName>
    <alternativeName>
        <fullName evidence="1">Chaperonin-10</fullName>
        <shortName evidence="1">Cpn10</shortName>
    </alternativeName>
</protein>
<organism>
    <name type="scientific">Methanosarcina acetivorans (strain ATCC 35395 / DSM 2834 / JCM 12185 / C2A)</name>
    <dbReference type="NCBI Taxonomy" id="188937"/>
    <lineage>
        <taxon>Archaea</taxon>
        <taxon>Methanobacteriati</taxon>
        <taxon>Methanobacteriota</taxon>
        <taxon>Stenosarchaea group</taxon>
        <taxon>Methanomicrobia</taxon>
        <taxon>Methanosarcinales</taxon>
        <taxon>Methanosarcinaceae</taxon>
        <taxon>Methanosarcina</taxon>
    </lineage>
</organism>
<sequence length="109" mass="12532">MNVQLILRSLTYKEEQRVIIRPIGERVLLKHQKKEEVTKGGIYIPESARQEKKEGIVIAVGTFEDGKELPLKKGDHVIYGGYQADEIEIDDEKYIFVDFKDILATVVEE</sequence>
<gene>
    <name evidence="1" type="primary">groES</name>
    <name evidence="1" type="synonym">groS</name>
    <name type="ordered locus">MA_0630</name>
</gene>